<name>SPAS_SHISO</name>
<accession>P0A1M9</accession>
<accession>P40707</accession>
<proteinExistence type="inferred from homology"/>
<geneLocation type="plasmid">
    <name>pINV</name>
</geneLocation>
<comment type="function">
    <text evidence="1">Required for surface presentation of invasion plasmid antigens. Could play a role in preserving the translocation competence of the ipa antigens. Required for invasion and for secretion of the three ipa proteins (By similarity).</text>
</comment>
<comment type="subcellular location">
    <subcellularLocation>
        <location evidence="3">Cell inner membrane</location>
        <topology evidence="3">Multi-pass membrane protein</topology>
    </subcellularLocation>
</comment>
<comment type="similarity">
    <text evidence="3">Belongs to the type III secretion exporter family.</text>
</comment>
<protein>
    <recommendedName>
        <fullName>Surface presentation of antigens protein SpaS</fullName>
    </recommendedName>
    <alternativeName>
        <fullName>Spa40 protein</fullName>
    </alternativeName>
</protein>
<sequence length="342" mass="39852">MANKTEKPTPKKLKDAAKKGQSFKFKDLTTVVIILVGTFTIISFFSLSDVMLLYRYVIINDFEINEGKYFFAVVIVFFKIIGFPLFFCVLSAVLPTLVQTKFVLATKAIKIDFSVLNPVKGLKKIFSIKTIKEFFKSILLLIILALTTYFFWINDRKIIFSQVFSSVDGLYLIWGRLFKDIILFFLAFSILVIILDFVIEFILYMKDMMMDKQEIKREYIEQEGHFETKSRRRELHIEILSEQTKSDIRNSKLVVMNPTHIAIGIYFNPEIAPAPFISLIETNQCALAVRKYANEVGIPTVRDVKLARKLYKTHTKYSFVDFEHLDEVLRLIVWLEQVENTH</sequence>
<organism>
    <name type="scientific">Shigella sonnei</name>
    <dbReference type="NCBI Taxonomy" id="624"/>
    <lineage>
        <taxon>Bacteria</taxon>
        <taxon>Pseudomonadati</taxon>
        <taxon>Pseudomonadota</taxon>
        <taxon>Gammaproteobacteria</taxon>
        <taxon>Enterobacterales</taxon>
        <taxon>Enterobacteriaceae</taxon>
        <taxon>Shigella</taxon>
    </lineage>
</organism>
<reference key="1">
    <citation type="submission" date="1995-05" db="EMBL/GenBank/DDBJ databases">
        <title>Comparison and high conservation of nucleotide sequences of spa-mxi regions between S.sonnei and S.flexneri -- identification of a new gene coding plausible membrane protein.</title>
        <authorList>
            <person name="Arakawa E."/>
            <person name="Kato J."/>
            <person name="Ito K."/>
            <person name="Watanabe H."/>
        </authorList>
    </citation>
    <scope>NUCLEOTIDE SEQUENCE [GENOMIC DNA]</scope>
    <source>
        <strain>HW383</strain>
    </source>
</reference>
<gene>
    <name type="primary">spaS</name>
    <name type="synonym">spa40</name>
</gene>
<dbReference type="EMBL" id="D50601">
    <property type="protein sequence ID" value="BAA09165.1"/>
    <property type="molecule type" value="Genomic_DNA"/>
</dbReference>
<dbReference type="SMR" id="P0A1M9"/>
<dbReference type="STRING" id="216599.GCA_000283715_05247"/>
<dbReference type="GO" id="GO:0005886">
    <property type="term" value="C:plasma membrane"/>
    <property type="evidence" value="ECO:0007669"/>
    <property type="project" value="UniProtKB-SubCell"/>
</dbReference>
<dbReference type="GO" id="GO:0009306">
    <property type="term" value="P:protein secretion"/>
    <property type="evidence" value="ECO:0007669"/>
    <property type="project" value="InterPro"/>
</dbReference>
<dbReference type="Gene3D" id="6.10.250.2080">
    <property type="match status" value="1"/>
</dbReference>
<dbReference type="Gene3D" id="3.40.1690.10">
    <property type="entry name" value="secretion proteins EscU"/>
    <property type="match status" value="1"/>
</dbReference>
<dbReference type="InterPro" id="IPR006307">
    <property type="entry name" value="BsaZ-like"/>
</dbReference>
<dbReference type="InterPro" id="IPR006135">
    <property type="entry name" value="T3SS_substrate_exporter"/>
</dbReference>
<dbReference type="InterPro" id="IPR029025">
    <property type="entry name" value="T3SS_substrate_exporter_C"/>
</dbReference>
<dbReference type="NCBIfam" id="TIGR01404">
    <property type="entry name" value="FlhB_rel_III"/>
    <property type="match status" value="1"/>
</dbReference>
<dbReference type="NCBIfam" id="NF006017">
    <property type="entry name" value="PRK08156.1"/>
    <property type="match status" value="1"/>
</dbReference>
<dbReference type="PANTHER" id="PTHR30531">
    <property type="entry name" value="FLAGELLAR BIOSYNTHETIC PROTEIN FLHB"/>
    <property type="match status" value="1"/>
</dbReference>
<dbReference type="PANTHER" id="PTHR30531:SF14">
    <property type="entry name" value="SURFACE PRESENTATION OF ANTIGENS PROTEIN SPAS"/>
    <property type="match status" value="1"/>
</dbReference>
<dbReference type="Pfam" id="PF01312">
    <property type="entry name" value="Bac_export_2"/>
    <property type="match status" value="1"/>
</dbReference>
<dbReference type="PRINTS" id="PR00950">
    <property type="entry name" value="TYPE3IMSPROT"/>
</dbReference>
<dbReference type="SUPFAM" id="SSF160544">
    <property type="entry name" value="EscU C-terminal domain-like"/>
    <property type="match status" value="1"/>
</dbReference>
<keyword id="KW-0997">Cell inner membrane</keyword>
<keyword id="KW-1003">Cell membrane</keyword>
<keyword id="KW-0472">Membrane</keyword>
<keyword id="KW-0614">Plasmid</keyword>
<keyword id="KW-0812">Transmembrane</keyword>
<keyword id="KW-1133">Transmembrane helix</keyword>
<keyword id="KW-0843">Virulence</keyword>
<evidence type="ECO:0000250" key="1"/>
<evidence type="ECO:0000255" key="2"/>
<evidence type="ECO:0000305" key="3"/>
<feature type="chain" id="PRO_0000180958" description="Surface presentation of antigens protein SpaS">
    <location>
        <begin position="1"/>
        <end position="342"/>
    </location>
</feature>
<feature type="transmembrane region" description="Helical" evidence="2">
    <location>
        <begin position="28"/>
        <end position="48"/>
    </location>
</feature>
<feature type="transmembrane region" description="Helical" evidence="2">
    <location>
        <begin position="70"/>
        <end position="90"/>
    </location>
</feature>
<feature type="transmembrane region" description="Helical" evidence="2">
    <location>
        <begin position="133"/>
        <end position="153"/>
    </location>
</feature>
<feature type="transmembrane region" description="Helical" evidence="2">
    <location>
        <begin position="158"/>
        <end position="178"/>
    </location>
</feature>
<feature type="transmembrane region" description="Helical" evidence="2">
    <location>
        <begin position="181"/>
        <end position="201"/>
    </location>
</feature>
<feature type="transmembrane region" description="Helical" evidence="2">
    <location>
        <begin position="260"/>
        <end position="280"/>
    </location>
</feature>